<proteinExistence type="inferred from homology"/>
<sequence>MNPRRKKRLGVVLAILFGLSATIGLIIYALNQNMDLFYTPTELVYGKEGKKPEIGQRLRIGGMVVEGSVKRDPNSLKVSFDLHDVGPSITVTYDGILPDLFREGQGIVAQGVLVEPTKIEAFEVLAKHDENYMPPEIAEAMKKTHAPLQYSQEQKQGSDQ</sequence>
<gene>
    <name evidence="1" type="primary">ccmE</name>
    <name evidence="1" type="synonym">cycJ</name>
    <name type="ordered locus">VC0395_A1641</name>
    <name type="ordered locus">VC395_2168</name>
</gene>
<accession>A5F6K5</accession>
<accession>C3M2N6</accession>
<name>CCME_VIBC3</name>
<keyword id="KW-0997">Cell inner membrane</keyword>
<keyword id="KW-1003">Cell membrane</keyword>
<keyword id="KW-0201">Cytochrome c-type biogenesis</keyword>
<keyword id="KW-0349">Heme</keyword>
<keyword id="KW-0408">Iron</keyword>
<keyword id="KW-0472">Membrane</keyword>
<keyword id="KW-0479">Metal-binding</keyword>
<keyword id="KW-0735">Signal-anchor</keyword>
<keyword id="KW-0812">Transmembrane</keyword>
<keyword id="KW-1133">Transmembrane helix</keyword>
<reference key="1">
    <citation type="submission" date="2007-03" db="EMBL/GenBank/DDBJ databases">
        <authorList>
            <person name="Heidelberg J."/>
        </authorList>
    </citation>
    <scope>NUCLEOTIDE SEQUENCE [LARGE SCALE GENOMIC DNA]</scope>
    <source>
        <strain>ATCC 39541 / Classical Ogawa 395 / O395</strain>
    </source>
</reference>
<reference key="2">
    <citation type="journal article" date="2008" name="PLoS ONE">
        <title>A recalibrated molecular clock and independent origins for the cholera pandemic clones.</title>
        <authorList>
            <person name="Feng L."/>
            <person name="Reeves P.R."/>
            <person name="Lan R."/>
            <person name="Ren Y."/>
            <person name="Gao C."/>
            <person name="Zhou Z."/>
            <person name="Ren Y."/>
            <person name="Cheng J."/>
            <person name="Wang W."/>
            <person name="Wang J."/>
            <person name="Qian W."/>
            <person name="Li D."/>
            <person name="Wang L."/>
        </authorList>
    </citation>
    <scope>NUCLEOTIDE SEQUENCE [LARGE SCALE GENOMIC DNA]</scope>
    <source>
        <strain>ATCC 39541 / Classical Ogawa 395 / O395</strain>
    </source>
</reference>
<dbReference type="EMBL" id="CP000627">
    <property type="protein sequence ID" value="ABQ20192.1"/>
    <property type="molecule type" value="Genomic_DNA"/>
</dbReference>
<dbReference type="EMBL" id="CP001235">
    <property type="protein sequence ID" value="ACP10160.1"/>
    <property type="molecule type" value="Genomic_DNA"/>
</dbReference>
<dbReference type="RefSeq" id="WP_001069622.1">
    <property type="nucleotide sequence ID" value="NZ_JAACZH010000001.1"/>
</dbReference>
<dbReference type="SMR" id="A5F6K5"/>
<dbReference type="GeneID" id="89513959"/>
<dbReference type="KEGG" id="vco:VC0395_A1641"/>
<dbReference type="KEGG" id="vcr:VC395_2168"/>
<dbReference type="PATRIC" id="fig|345073.21.peg.2095"/>
<dbReference type="eggNOG" id="COG2332">
    <property type="taxonomic scope" value="Bacteria"/>
</dbReference>
<dbReference type="HOGENOM" id="CLU_079503_1_0_6"/>
<dbReference type="OrthoDB" id="9793584at2"/>
<dbReference type="Proteomes" id="UP000000249">
    <property type="component" value="Chromosome 2"/>
</dbReference>
<dbReference type="GO" id="GO:0005886">
    <property type="term" value="C:plasma membrane"/>
    <property type="evidence" value="ECO:0007669"/>
    <property type="project" value="UniProtKB-SubCell"/>
</dbReference>
<dbReference type="GO" id="GO:0020037">
    <property type="term" value="F:heme binding"/>
    <property type="evidence" value="ECO:0007669"/>
    <property type="project" value="InterPro"/>
</dbReference>
<dbReference type="GO" id="GO:0046872">
    <property type="term" value="F:metal ion binding"/>
    <property type="evidence" value="ECO:0007669"/>
    <property type="project" value="UniProtKB-KW"/>
</dbReference>
<dbReference type="GO" id="GO:0017004">
    <property type="term" value="P:cytochrome complex assembly"/>
    <property type="evidence" value="ECO:0007669"/>
    <property type="project" value="UniProtKB-KW"/>
</dbReference>
<dbReference type="FunFam" id="2.40.50.140:FF:000104">
    <property type="entry name" value="Cytochrome c-type biogenesis protein CcmE"/>
    <property type="match status" value="1"/>
</dbReference>
<dbReference type="Gene3D" id="2.40.50.140">
    <property type="entry name" value="Nucleic acid-binding proteins"/>
    <property type="match status" value="1"/>
</dbReference>
<dbReference type="HAMAP" id="MF_01959">
    <property type="entry name" value="CcmE"/>
    <property type="match status" value="1"/>
</dbReference>
<dbReference type="InterPro" id="IPR004329">
    <property type="entry name" value="CcmE"/>
</dbReference>
<dbReference type="InterPro" id="IPR036127">
    <property type="entry name" value="CcmE-like_sf"/>
</dbReference>
<dbReference type="InterPro" id="IPR012340">
    <property type="entry name" value="NA-bd_OB-fold"/>
</dbReference>
<dbReference type="NCBIfam" id="NF009638">
    <property type="entry name" value="PRK13165.1"/>
    <property type="match status" value="1"/>
</dbReference>
<dbReference type="NCBIfam" id="NF009727">
    <property type="entry name" value="PRK13254.1-1"/>
    <property type="match status" value="1"/>
</dbReference>
<dbReference type="NCBIfam" id="NF009729">
    <property type="entry name" value="PRK13254.1-3"/>
    <property type="match status" value="1"/>
</dbReference>
<dbReference type="PANTHER" id="PTHR34128">
    <property type="entry name" value="CYTOCHROME C-TYPE BIOGENESIS PROTEIN CCME HOMOLOG, MITOCHONDRIAL"/>
    <property type="match status" value="1"/>
</dbReference>
<dbReference type="PANTHER" id="PTHR34128:SF2">
    <property type="entry name" value="CYTOCHROME C-TYPE BIOGENESIS PROTEIN CCME HOMOLOG, MITOCHONDRIAL"/>
    <property type="match status" value="1"/>
</dbReference>
<dbReference type="Pfam" id="PF03100">
    <property type="entry name" value="CcmE"/>
    <property type="match status" value="1"/>
</dbReference>
<dbReference type="SUPFAM" id="SSF82093">
    <property type="entry name" value="Heme chaperone CcmE"/>
    <property type="match status" value="1"/>
</dbReference>
<protein>
    <recommendedName>
        <fullName evidence="1">Cytochrome c-type biogenesis protein CcmE</fullName>
    </recommendedName>
    <alternativeName>
        <fullName evidence="1">Cytochrome c maturation protein E</fullName>
    </alternativeName>
    <alternativeName>
        <fullName evidence="1">Heme chaperone CcmE</fullName>
    </alternativeName>
</protein>
<organism>
    <name type="scientific">Vibrio cholerae serotype O1 (strain ATCC 39541 / Classical Ogawa 395 / O395)</name>
    <dbReference type="NCBI Taxonomy" id="345073"/>
    <lineage>
        <taxon>Bacteria</taxon>
        <taxon>Pseudomonadati</taxon>
        <taxon>Pseudomonadota</taxon>
        <taxon>Gammaproteobacteria</taxon>
        <taxon>Vibrionales</taxon>
        <taxon>Vibrionaceae</taxon>
        <taxon>Vibrio</taxon>
    </lineage>
</organism>
<feature type="chain" id="PRO_1000073706" description="Cytochrome c-type biogenesis protein CcmE">
    <location>
        <begin position="1"/>
        <end position="160"/>
    </location>
</feature>
<feature type="topological domain" description="Cytoplasmic" evidence="1">
    <location>
        <begin position="1"/>
        <end position="8"/>
    </location>
</feature>
<feature type="transmembrane region" description="Helical; Signal-anchor for type II membrane protein" evidence="1">
    <location>
        <begin position="9"/>
        <end position="29"/>
    </location>
</feature>
<feature type="topological domain" description="Periplasmic" evidence="1">
    <location>
        <begin position="30"/>
        <end position="160"/>
    </location>
</feature>
<feature type="binding site" description="covalent" evidence="1">
    <location>
        <position position="128"/>
    </location>
    <ligand>
        <name>heme</name>
        <dbReference type="ChEBI" id="CHEBI:30413"/>
    </ligand>
</feature>
<feature type="binding site" description="axial binding residue" evidence="1">
    <location>
        <position position="132"/>
    </location>
    <ligand>
        <name>heme</name>
        <dbReference type="ChEBI" id="CHEBI:30413"/>
    </ligand>
    <ligandPart>
        <name>Fe</name>
        <dbReference type="ChEBI" id="CHEBI:18248"/>
    </ligandPart>
</feature>
<comment type="function">
    <text evidence="1">Heme chaperone required for the biogenesis of c-type cytochromes. Transiently binds heme delivered by CcmC and transfers the heme to apo-cytochromes in a process facilitated by CcmF and CcmH.</text>
</comment>
<comment type="subcellular location">
    <subcellularLocation>
        <location evidence="1">Cell inner membrane</location>
        <topology evidence="1">Single-pass type II membrane protein</topology>
        <orientation evidence="1">Periplasmic side</orientation>
    </subcellularLocation>
</comment>
<comment type="similarity">
    <text evidence="1">Belongs to the CcmE/CycJ family.</text>
</comment>
<evidence type="ECO:0000255" key="1">
    <source>
        <dbReference type="HAMAP-Rule" id="MF_01959"/>
    </source>
</evidence>